<sequence>MPMQEPQRRLLGPFNSTRTGAPHLELSANQTGPWCLHVSIPDGLFLSLGLVSLVENVLVVISIAKNQNLHSPMYYFICCLALSDLLVSVSIVLETTLILVLEAGALATRVTVVQQLDNVIDVLICASMVSSLCFLGAIAVDRYISIFYALRYHSIVTLPRARWAIVAIWVASISSSTLFVAYYNHTAVLLCLVTFFLATLALMVVLYVHMLARAHQHAQAIAQLHKRQHLVHQGFRLKGAATLTILLGIFFLCWGPFFLYLTLIVLCPKHPTCGCFFKNLNLFLALIIFNSIVDPLIYAFRSQELRMTLKEVLLCSW</sequence>
<name>MSHR_CHAPN</name>
<dbReference type="EMBL" id="AY258933">
    <property type="protein sequence ID" value="AAP03540.1"/>
    <property type="molecule type" value="Genomic_DNA"/>
</dbReference>
<dbReference type="EMBL" id="AY258934">
    <property type="protein sequence ID" value="AAP03541.1"/>
    <property type="molecule type" value="Genomic_DNA"/>
</dbReference>
<dbReference type="SMR" id="Q80SZ5"/>
<dbReference type="GlyCosmos" id="Q80SZ5">
    <property type="glycosylation" value="2 sites, No reported glycans"/>
</dbReference>
<dbReference type="GO" id="GO:0005886">
    <property type="term" value="C:plasma membrane"/>
    <property type="evidence" value="ECO:0000250"/>
    <property type="project" value="UniProtKB"/>
</dbReference>
<dbReference type="GO" id="GO:0004980">
    <property type="term" value="F:melanocyte-stimulating hormone receptor activity"/>
    <property type="evidence" value="ECO:0007669"/>
    <property type="project" value="InterPro"/>
</dbReference>
<dbReference type="FunFam" id="1.20.1070.10:FF:000211">
    <property type="entry name" value="Melanocyte-stimulating hormone receptor"/>
    <property type="match status" value="1"/>
</dbReference>
<dbReference type="Gene3D" id="1.20.1070.10">
    <property type="entry name" value="Rhodopsin 7-helix transmembrane proteins"/>
    <property type="match status" value="1"/>
</dbReference>
<dbReference type="InterPro" id="IPR000276">
    <property type="entry name" value="GPCR_Rhodpsn"/>
</dbReference>
<dbReference type="InterPro" id="IPR017452">
    <property type="entry name" value="GPCR_Rhodpsn_7TM"/>
</dbReference>
<dbReference type="InterPro" id="IPR001671">
    <property type="entry name" value="Melcrt_ACTH_rcpt"/>
</dbReference>
<dbReference type="InterPro" id="IPR000761">
    <property type="entry name" value="MSH_rcpt"/>
</dbReference>
<dbReference type="PANTHER" id="PTHR22750">
    <property type="entry name" value="G-PROTEIN COUPLED RECEPTOR"/>
    <property type="match status" value="1"/>
</dbReference>
<dbReference type="Pfam" id="PF00001">
    <property type="entry name" value="7tm_1"/>
    <property type="match status" value="2"/>
</dbReference>
<dbReference type="PRINTS" id="PR00237">
    <property type="entry name" value="GPCRRHODOPSN"/>
</dbReference>
<dbReference type="PRINTS" id="PR00534">
    <property type="entry name" value="MCRFAMILY"/>
</dbReference>
<dbReference type="PRINTS" id="PR00536">
    <property type="entry name" value="MELNOCYTESHR"/>
</dbReference>
<dbReference type="SMART" id="SM01381">
    <property type="entry name" value="7TM_GPCR_Srsx"/>
    <property type="match status" value="1"/>
</dbReference>
<dbReference type="SUPFAM" id="SSF81321">
    <property type="entry name" value="Family A G protein-coupled receptor-like"/>
    <property type="match status" value="1"/>
</dbReference>
<dbReference type="PROSITE" id="PS00237">
    <property type="entry name" value="G_PROTEIN_RECEP_F1_1"/>
    <property type="match status" value="1"/>
</dbReference>
<dbReference type="PROSITE" id="PS50262">
    <property type="entry name" value="G_PROTEIN_RECEP_F1_2"/>
    <property type="match status" value="1"/>
</dbReference>
<gene>
    <name type="primary">MC1R</name>
</gene>
<evidence type="ECO:0000250" key="1">
    <source>
        <dbReference type="UniProtKB" id="Q01726"/>
    </source>
</evidence>
<evidence type="ECO:0000255" key="2"/>
<evidence type="ECO:0000255" key="3">
    <source>
        <dbReference type="PROSITE-ProRule" id="PRU00521"/>
    </source>
</evidence>
<keyword id="KW-1003">Cell membrane</keyword>
<keyword id="KW-0297">G-protein coupled receptor</keyword>
<keyword id="KW-0325">Glycoprotein</keyword>
<keyword id="KW-0449">Lipoprotein</keyword>
<keyword id="KW-0472">Membrane</keyword>
<keyword id="KW-0564">Palmitate</keyword>
<keyword id="KW-0675">Receptor</keyword>
<keyword id="KW-0807">Transducer</keyword>
<keyword id="KW-0812">Transmembrane</keyword>
<keyword id="KW-1133">Transmembrane helix</keyword>
<protein>
    <recommendedName>
        <fullName>Melanocyte-stimulating hormone receptor</fullName>
        <shortName>MSH-R</shortName>
    </recommendedName>
    <alternativeName>
        <fullName>Melanocortin receptor 1</fullName>
        <shortName>MC1-R</shortName>
    </alternativeName>
</protein>
<feature type="chain" id="PRO_0000256703" description="Melanocyte-stimulating hormone receptor">
    <location>
        <begin position="1"/>
        <end position="317"/>
    </location>
</feature>
<feature type="topological domain" description="Extracellular" evidence="2">
    <location>
        <begin position="1"/>
        <end position="37"/>
    </location>
</feature>
<feature type="transmembrane region" description="Helical; Name=1" evidence="2">
    <location>
        <begin position="38"/>
        <end position="63"/>
    </location>
</feature>
<feature type="topological domain" description="Cytoplasmic" evidence="2">
    <location>
        <begin position="64"/>
        <end position="72"/>
    </location>
</feature>
<feature type="transmembrane region" description="Helical; Name=2" evidence="2">
    <location>
        <begin position="73"/>
        <end position="93"/>
    </location>
</feature>
<feature type="topological domain" description="Extracellular" evidence="2">
    <location>
        <begin position="94"/>
        <end position="118"/>
    </location>
</feature>
<feature type="transmembrane region" description="Helical; Name=3" evidence="2">
    <location>
        <begin position="119"/>
        <end position="140"/>
    </location>
</feature>
<feature type="topological domain" description="Cytoplasmic" evidence="2">
    <location>
        <begin position="141"/>
        <end position="163"/>
    </location>
</feature>
<feature type="transmembrane region" description="Helical; Name=4" evidence="2">
    <location>
        <begin position="164"/>
        <end position="183"/>
    </location>
</feature>
<feature type="topological domain" description="Extracellular" evidence="2">
    <location>
        <begin position="184"/>
        <end position="191"/>
    </location>
</feature>
<feature type="transmembrane region" description="Helical; Name=5" evidence="2">
    <location>
        <begin position="192"/>
        <end position="211"/>
    </location>
</feature>
<feature type="topological domain" description="Cytoplasmic" evidence="2">
    <location>
        <begin position="212"/>
        <end position="240"/>
    </location>
</feature>
<feature type="transmembrane region" description="Helical; Name=6" evidence="2">
    <location>
        <begin position="241"/>
        <end position="266"/>
    </location>
</feature>
<feature type="topological domain" description="Extracellular" evidence="2">
    <location>
        <begin position="267"/>
        <end position="279"/>
    </location>
</feature>
<feature type="transmembrane region" description="Helical; Name=7" evidence="2">
    <location>
        <begin position="280"/>
        <end position="300"/>
    </location>
</feature>
<feature type="topological domain" description="Cytoplasmic" evidence="2">
    <location>
        <begin position="301"/>
        <end position="317"/>
    </location>
</feature>
<feature type="lipid moiety-binding region" description="S-palmitoyl cysteine" evidence="2">
    <location>
        <position position="315"/>
    </location>
</feature>
<feature type="glycosylation site" description="N-linked (GlcNAc...) asparagine" evidence="2">
    <location>
        <position position="15"/>
    </location>
</feature>
<feature type="glycosylation site" description="N-linked (GlcNAc...) asparagine" evidence="2">
    <location>
        <position position="29"/>
    </location>
</feature>
<reference key="1">
    <citation type="journal article" date="2003" name="Proc. Natl. Acad. Sci. U.S.A.">
        <title>The genetic basis of adaptive melanism in pocket mice.</title>
        <authorList>
            <person name="Nachman M.W."/>
            <person name="Hoekstra H.E."/>
            <person name="D'Agostino S.L."/>
        </authorList>
    </citation>
    <scope>NUCLEOTIDE SEQUENCE [GENOMIC DNA]</scope>
</reference>
<accession>Q80SZ5</accession>
<comment type="function">
    <text evidence="1">Receptor for MSH (alpha, beta and gamma) and ACTH. The activity of this receptor is mediated by G proteins which activate adenylate cyclase. Mediates melanogenesis, the production of eumelanin (black/brown) and phaeomelanin (red/yellow), via regulation of cAMP signaling in melanocytes.</text>
</comment>
<comment type="subunit">
    <text evidence="1">Interacts with MGRN1, but does not undergo MGRN1-mediated ubiquitination; this interaction competes with GNAS-binding and thus inhibits agonist-induced cAMP production. Interacts with OPN3; the interaction results in a decrease in MC1R-mediated cAMP signaling and ultimately a decrease in melanin production in melanocytes.</text>
</comment>
<comment type="subcellular location">
    <subcellularLocation>
        <location evidence="1">Cell membrane</location>
        <topology evidence="2">Multi-pass membrane protein</topology>
    </subcellularLocation>
</comment>
<comment type="similarity">
    <text evidence="3">Belongs to the G-protein coupled receptor 1 family.</text>
</comment>
<proteinExistence type="inferred from homology"/>
<organism>
    <name type="scientific">Chaetodipus penicillatus</name>
    <name type="common">Desert pocket mouse</name>
    <name type="synonym">Perognathus penicillatus</name>
    <dbReference type="NCBI Taxonomy" id="38672"/>
    <lineage>
        <taxon>Eukaryota</taxon>
        <taxon>Metazoa</taxon>
        <taxon>Chordata</taxon>
        <taxon>Craniata</taxon>
        <taxon>Vertebrata</taxon>
        <taxon>Euteleostomi</taxon>
        <taxon>Mammalia</taxon>
        <taxon>Eutheria</taxon>
        <taxon>Euarchontoglires</taxon>
        <taxon>Glires</taxon>
        <taxon>Rodentia</taxon>
        <taxon>Castorimorpha</taxon>
        <taxon>Heteromyidae</taxon>
        <taxon>Perognathinae</taxon>
        <taxon>Chaetodipus</taxon>
    </lineage>
</organism>